<keyword id="KW-0963">Cytoplasm</keyword>
<keyword id="KW-0269">Exonuclease</keyword>
<keyword id="KW-0378">Hydrolase</keyword>
<keyword id="KW-0540">Nuclease</keyword>
<keyword id="KW-0539">Nucleus</keyword>
<keyword id="KW-1185">Reference proteome</keyword>
<organism>
    <name type="scientific">Schizosaccharomyces pombe (strain 972 / ATCC 24843)</name>
    <name type="common">Fission yeast</name>
    <dbReference type="NCBI Taxonomy" id="284812"/>
    <lineage>
        <taxon>Eukaryota</taxon>
        <taxon>Fungi</taxon>
        <taxon>Dikarya</taxon>
        <taxon>Ascomycota</taxon>
        <taxon>Taphrinomycotina</taxon>
        <taxon>Schizosaccharomycetes</taxon>
        <taxon>Schizosaccharomycetales</taxon>
        <taxon>Schizosaccharomycetaceae</taxon>
        <taxon>Schizosaccharomyces</taxon>
    </lineage>
</organism>
<name>YNTB_SCHPO</name>
<protein>
    <recommendedName>
        <fullName>Probable RNA exonuclease C9B6.11c</fullName>
        <ecNumber>3.1.-.-</ecNumber>
    </recommendedName>
</protein>
<sequence length="502" mass="57651">MYTCPKTCTLTLKFFIDRFHTDYRLSKLAISFFDQKKNKMADSIPVKKKGSAKGPPSFVTPEYIEKQRQKKLEKMAKKAARKPIAPPSNAPPEFNTDFIKREMLSIPNYAPFETEKSALDITIMTYNVLAQTNIRRSMFPHSGEALKWKNRSRMLANELTYYSPTLGCMQEVDAEFVPNFYKKLLGGLGYELHFIKGEGKTHGIMIFWKSSLFKKVQDLTIYYDDHDELPGRMNTKNIGCCVRLERVDDPSRGLFLATTHLFWHPYGSYERLRQGAILVKEVNKMAQSHPSWPVFIAGDFNTEPFDTNFPALTTRPLSICQRATDIIERSMNYVFGESELEEKNASTKTENDSNEDDKEECQSSSTSSVPESTASTPKKRILHVQNDYVPHYRSFYQQHEQNPVLFSLYSVGYKLVHPENAKNTFDHPAFTNWAHAYQGHLDYIFVMNRDTSLQTPENQVVEGIKLKALLRVPLPSEMKEAEPLEGRYPSDHVALMANVQIV</sequence>
<comment type="subcellular location">
    <subcellularLocation>
        <location evidence="3">Cytoplasm</location>
    </subcellularLocation>
    <subcellularLocation>
        <location evidence="3">Nucleus</location>
    </subcellularLocation>
</comment>
<comment type="similarity">
    <text evidence="1">Belongs to the CCR4/nocturin family.</text>
</comment>
<feature type="chain" id="PRO_0000316917" description="Probable RNA exonuclease C9B6.11c">
    <location>
        <begin position="1"/>
        <end position="502"/>
    </location>
</feature>
<feature type="region of interest" description="Disordered" evidence="2">
    <location>
        <begin position="338"/>
        <end position="379"/>
    </location>
</feature>
<feature type="compositionally biased region" description="Basic and acidic residues" evidence="2">
    <location>
        <begin position="341"/>
        <end position="351"/>
    </location>
</feature>
<feature type="compositionally biased region" description="Low complexity" evidence="2">
    <location>
        <begin position="363"/>
        <end position="376"/>
    </location>
</feature>
<reference evidence="5" key="1">
    <citation type="journal article" date="2002" name="Nature">
        <title>The genome sequence of Schizosaccharomyces pombe.</title>
        <authorList>
            <person name="Wood V."/>
            <person name="Gwilliam R."/>
            <person name="Rajandream M.A."/>
            <person name="Lyne M.H."/>
            <person name="Lyne R."/>
            <person name="Stewart A."/>
            <person name="Sgouros J.G."/>
            <person name="Peat N."/>
            <person name="Hayles J."/>
            <person name="Baker S.G."/>
            <person name="Basham D."/>
            <person name="Bowman S."/>
            <person name="Brooks K."/>
            <person name="Brown D."/>
            <person name="Brown S."/>
            <person name="Chillingworth T."/>
            <person name="Churcher C.M."/>
            <person name="Collins M."/>
            <person name="Connor R."/>
            <person name="Cronin A."/>
            <person name="Davis P."/>
            <person name="Feltwell T."/>
            <person name="Fraser A."/>
            <person name="Gentles S."/>
            <person name="Goble A."/>
            <person name="Hamlin N."/>
            <person name="Harris D.E."/>
            <person name="Hidalgo J."/>
            <person name="Hodgson G."/>
            <person name="Holroyd S."/>
            <person name="Hornsby T."/>
            <person name="Howarth S."/>
            <person name="Huckle E.J."/>
            <person name="Hunt S."/>
            <person name="Jagels K."/>
            <person name="James K.D."/>
            <person name="Jones L."/>
            <person name="Jones M."/>
            <person name="Leather S."/>
            <person name="McDonald S."/>
            <person name="McLean J."/>
            <person name="Mooney P."/>
            <person name="Moule S."/>
            <person name="Mungall K.L."/>
            <person name="Murphy L.D."/>
            <person name="Niblett D."/>
            <person name="Odell C."/>
            <person name="Oliver K."/>
            <person name="O'Neil S."/>
            <person name="Pearson D."/>
            <person name="Quail M.A."/>
            <person name="Rabbinowitsch E."/>
            <person name="Rutherford K.M."/>
            <person name="Rutter S."/>
            <person name="Saunders D."/>
            <person name="Seeger K."/>
            <person name="Sharp S."/>
            <person name="Skelton J."/>
            <person name="Simmonds M.N."/>
            <person name="Squares R."/>
            <person name="Squares S."/>
            <person name="Stevens K."/>
            <person name="Taylor K."/>
            <person name="Taylor R.G."/>
            <person name="Tivey A."/>
            <person name="Walsh S.V."/>
            <person name="Warren T."/>
            <person name="Whitehead S."/>
            <person name="Woodward J.R."/>
            <person name="Volckaert G."/>
            <person name="Aert R."/>
            <person name="Robben J."/>
            <person name="Grymonprez B."/>
            <person name="Weltjens I."/>
            <person name="Vanstreels E."/>
            <person name="Rieger M."/>
            <person name="Schaefer M."/>
            <person name="Mueller-Auer S."/>
            <person name="Gabel C."/>
            <person name="Fuchs M."/>
            <person name="Duesterhoeft A."/>
            <person name="Fritzc C."/>
            <person name="Holzer E."/>
            <person name="Moestl D."/>
            <person name="Hilbert H."/>
            <person name="Borzym K."/>
            <person name="Langer I."/>
            <person name="Beck A."/>
            <person name="Lehrach H."/>
            <person name="Reinhardt R."/>
            <person name="Pohl T.M."/>
            <person name="Eger P."/>
            <person name="Zimmermann W."/>
            <person name="Wedler H."/>
            <person name="Wambutt R."/>
            <person name="Purnelle B."/>
            <person name="Goffeau A."/>
            <person name="Cadieu E."/>
            <person name="Dreano S."/>
            <person name="Gloux S."/>
            <person name="Lelaure V."/>
            <person name="Mottier S."/>
            <person name="Galibert F."/>
            <person name="Aves S.J."/>
            <person name="Xiang Z."/>
            <person name="Hunt C."/>
            <person name="Moore K."/>
            <person name="Hurst S.M."/>
            <person name="Lucas M."/>
            <person name="Rochet M."/>
            <person name="Gaillardin C."/>
            <person name="Tallada V.A."/>
            <person name="Garzon A."/>
            <person name="Thode G."/>
            <person name="Daga R.R."/>
            <person name="Cruzado L."/>
            <person name="Jimenez J."/>
            <person name="Sanchez M."/>
            <person name="del Rey F."/>
            <person name="Benito J."/>
            <person name="Dominguez A."/>
            <person name="Revuelta J.L."/>
            <person name="Moreno S."/>
            <person name="Armstrong J."/>
            <person name="Forsburg S.L."/>
            <person name="Cerutti L."/>
            <person name="Lowe T."/>
            <person name="McCombie W.R."/>
            <person name="Paulsen I."/>
            <person name="Potashkin J."/>
            <person name="Shpakovski G.V."/>
            <person name="Ussery D."/>
            <person name="Barrell B.G."/>
            <person name="Nurse P."/>
        </authorList>
    </citation>
    <scope>NUCLEOTIDE SEQUENCE [LARGE SCALE GENOMIC DNA]</scope>
    <source>
        <strain>972 / ATCC 24843</strain>
    </source>
</reference>
<reference evidence="4" key="2">
    <citation type="journal article" date="2006" name="Nat. Biotechnol.">
        <title>ORFeome cloning and global analysis of protein localization in the fission yeast Schizosaccharomyces pombe.</title>
        <authorList>
            <person name="Matsuyama A."/>
            <person name="Arai R."/>
            <person name="Yashiroda Y."/>
            <person name="Shirai A."/>
            <person name="Kamata A."/>
            <person name="Sekido S."/>
            <person name="Kobayashi Y."/>
            <person name="Hashimoto A."/>
            <person name="Hamamoto M."/>
            <person name="Hiraoka Y."/>
            <person name="Horinouchi S."/>
            <person name="Yoshida M."/>
        </authorList>
    </citation>
    <scope>SUBCELLULAR LOCATION [LARGE SCALE ANALYSIS]</scope>
</reference>
<dbReference type="EC" id="3.1.-.-"/>
<dbReference type="EMBL" id="CU329671">
    <property type="protein sequence ID" value="CAB42372.1"/>
    <property type="molecule type" value="Genomic_DNA"/>
</dbReference>
<dbReference type="PIR" id="T40792">
    <property type="entry name" value="T40792"/>
</dbReference>
<dbReference type="RefSeq" id="NP_595753.1">
    <property type="nucleotide sequence ID" value="NM_001021653.2"/>
</dbReference>
<dbReference type="SMR" id="Q9Y7M8"/>
<dbReference type="BioGRID" id="277799">
    <property type="interactions" value="15"/>
</dbReference>
<dbReference type="FunCoup" id="Q9Y7M8">
    <property type="interactions" value="284"/>
</dbReference>
<dbReference type="STRING" id="284812.Q9Y7M8"/>
<dbReference type="iPTMnet" id="Q9Y7M8"/>
<dbReference type="PaxDb" id="4896-SPBC9B6.11c.1"/>
<dbReference type="EnsemblFungi" id="SPBC9B6.11c.1">
    <property type="protein sequence ID" value="SPBC9B6.11c.1:pep"/>
    <property type="gene ID" value="SPBC9B6.11c"/>
</dbReference>
<dbReference type="KEGG" id="spo:2541286"/>
<dbReference type="PomBase" id="SPBC9B6.11c"/>
<dbReference type="VEuPathDB" id="FungiDB:SPBC9B6.11c"/>
<dbReference type="eggNOG" id="KOG2338">
    <property type="taxonomic scope" value="Eukaryota"/>
</dbReference>
<dbReference type="HOGENOM" id="CLU_034867_0_0_1"/>
<dbReference type="InParanoid" id="Q9Y7M8"/>
<dbReference type="OMA" id="YTHYWKT"/>
<dbReference type="PhylomeDB" id="Q9Y7M8"/>
<dbReference type="PRO" id="PR:Q9Y7M8"/>
<dbReference type="Proteomes" id="UP000002485">
    <property type="component" value="Chromosome II"/>
</dbReference>
<dbReference type="GO" id="GO:0005737">
    <property type="term" value="C:cytoplasm"/>
    <property type="evidence" value="ECO:0007005"/>
    <property type="project" value="PomBase"/>
</dbReference>
<dbReference type="GO" id="GO:0005829">
    <property type="term" value="C:cytosol"/>
    <property type="evidence" value="ECO:0007005"/>
    <property type="project" value="PomBase"/>
</dbReference>
<dbReference type="GO" id="GO:0005634">
    <property type="term" value="C:nucleus"/>
    <property type="evidence" value="ECO:0007005"/>
    <property type="project" value="PomBase"/>
</dbReference>
<dbReference type="GO" id="GO:0004535">
    <property type="term" value="F:poly(A)-specific ribonuclease activity"/>
    <property type="evidence" value="ECO:0000318"/>
    <property type="project" value="GO_Central"/>
</dbReference>
<dbReference type="GO" id="GO:0004521">
    <property type="term" value="F:RNA endonuclease activity"/>
    <property type="evidence" value="ECO:0000266"/>
    <property type="project" value="PomBase"/>
</dbReference>
<dbReference type="GO" id="GO:0006364">
    <property type="term" value="P:rRNA processing"/>
    <property type="evidence" value="ECO:0000266"/>
    <property type="project" value="PomBase"/>
</dbReference>
<dbReference type="Gene3D" id="3.60.10.10">
    <property type="entry name" value="Endonuclease/exonuclease/phosphatase"/>
    <property type="match status" value="1"/>
</dbReference>
<dbReference type="InterPro" id="IPR050410">
    <property type="entry name" value="CCR4/nocturin_mRNA_transcr"/>
</dbReference>
<dbReference type="InterPro" id="IPR036691">
    <property type="entry name" value="Endo/exonu/phosph_ase_sf"/>
</dbReference>
<dbReference type="InterPro" id="IPR005135">
    <property type="entry name" value="Endo/exonuclease/phosphatase"/>
</dbReference>
<dbReference type="PANTHER" id="PTHR12121">
    <property type="entry name" value="CARBON CATABOLITE REPRESSOR PROTEIN 4"/>
    <property type="match status" value="1"/>
</dbReference>
<dbReference type="PANTHER" id="PTHR12121:SF45">
    <property type="entry name" value="NOCTURNIN"/>
    <property type="match status" value="1"/>
</dbReference>
<dbReference type="Pfam" id="PF03372">
    <property type="entry name" value="Exo_endo_phos"/>
    <property type="match status" value="1"/>
</dbReference>
<dbReference type="SUPFAM" id="SSF56219">
    <property type="entry name" value="DNase I-like"/>
    <property type="match status" value="1"/>
</dbReference>
<gene>
    <name type="ORF">SPBC9B6.11c</name>
</gene>
<accession>Q9Y7M8</accession>
<evidence type="ECO:0000255" key="1"/>
<evidence type="ECO:0000256" key="2">
    <source>
        <dbReference type="SAM" id="MobiDB-lite"/>
    </source>
</evidence>
<evidence type="ECO:0000269" key="3">
    <source>
    </source>
</evidence>
<evidence type="ECO:0000305" key="4"/>
<evidence type="ECO:0000312" key="5">
    <source>
        <dbReference type="EMBL" id="CAB42372.1"/>
    </source>
</evidence>
<proteinExistence type="inferred from homology"/>